<evidence type="ECO:0000255" key="1">
    <source>
        <dbReference type="HAMAP-Rule" id="MF_01526"/>
    </source>
</evidence>
<comment type="similarity">
    <text evidence="1">Belongs to the UPF0342 family.</text>
</comment>
<gene>
    <name type="ordered locus">gbs1446</name>
</gene>
<reference key="1">
    <citation type="journal article" date="2002" name="Mol. Microbiol.">
        <title>Genome sequence of Streptococcus agalactiae, a pathogen causing invasive neonatal disease.</title>
        <authorList>
            <person name="Glaser P."/>
            <person name="Rusniok C."/>
            <person name="Buchrieser C."/>
            <person name="Chevalier F."/>
            <person name="Frangeul L."/>
            <person name="Msadek T."/>
            <person name="Zouine M."/>
            <person name="Couve E."/>
            <person name="Lalioui L."/>
            <person name="Poyart C."/>
            <person name="Trieu-Cuot P."/>
            <person name="Kunst F."/>
        </authorList>
    </citation>
    <scope>NUCLEOTIDE SEQUENCE [LARGE SCALE GENOMIC DNA]</scope>
    <source>
        <strain>NEM316</strain>
    </source>
</reference>
<name>Y1446_STRA3</name>
<organism>
    <name type="scientific">Streptococcus agalactiae serotype III (strain NEM316)</name>
    <dbReference type="NCBI Taxonomy" id="211110"/>
    <lineage>
        <taxon>Bacteria</taxon>
        <taxon>Bacillati</taxon>
        <taxon>Bacillota</taxon>
        <taxon>Bacilli</taxon>
        <taxon>Lactobacillales</taxon>
        <taxon>Streptococcaceae</taxon>
        <taxon>Streptococcus</taxon>
    </lineage>
</organism>
<feature type="chain" id="PRO_0000109991" description="UPF0342 protein gbs1446">
    <location>
        <begin position="1"/>
        <end position="111"/>
    </location>
</feature>
<proteinExistence type="inferred from homology"/>
<dbReference type="EMBL" id="AL766850">
    <property type="protein sequence ID" value="CAD47105.1"/>
    <property type="molecule type" value="Genomic_DNA"/>
</dbReference>
<dbReference type="RefSeq" id="WP_000024620.1">
    <property type="nucleotide sequence ID" value="NC_004368.1"/>
</dbReference>
<dbReference type="SMR" id="Q8E4F5"/>
<dbReference type="KEGG" id="san:gbs1446"/>
<dbReference type="eggNOG" id="COG3679">
    <property type="taxonomic scope" value="Bacteria"/>
</dbReference>
<dbReference type="HOGENOM" id="CLU_140243_2_0_9"/>
<dbReference type="Proteomes" id="UP000000823">
    <property type="component" value="Chromosome"/>
</dbReference>
<dbReference type="Gene3D" id="1.20.1500.10">
    <property type="entry name" value="YheA/YmcA-like"/>
    <property type="match status" value="1"/>
</dbReference>
<dbReference type="HAMAP" id="MF_01526">
    <property type="entry name" value="UPF0342"/>
    <property type="match status" value="1"/>
</dbReference>
<dbReference type="InterPro" id="IPR010368">
    <property type="entry name" value="Com_YlbF"/>
</dbReference>
<dbReference type="InterPro" id="IPR023378">
    <property type="entry name" value="YheA/YmcA-like_dom_sf"/>
</dbReference>
<dbReference type="NCBIfam" id="NF010209">
    <property type="entry name" value="PRK13676.1-1"/>
    <property type="match status" value="1"/>
</dbReference>
<dbReference type="Pfam" id="PF06133">
    <property type="entry name" value="Com_YlbF"/>
    <property type="match status" value="1"/>
</dbReference>
<dbReference type="SUPFAM" id="SSF158622">
    <property type="entry name" value="YheA/YmcA-like"/>
    <property type="match status" value="1"/>
</dbReference>
<protein>
    <recommendedName>
        <fullName evidence="1">UPF0342 protein gbs1446</fullName>
    </recommendedName>
</protein>
<sequence length="111" mass="12703">MANVYDLANELERAVRALPEYQAVLTAKAAIENDADAQVLWQDFLAAQSKVQEMMQSGQMPSQEEQDEMSKLGEKIESNDLLKVYFDHQQRLSVYMSDIEKIVFAPMQDLM</sequence>
<accession>Q8E4F5</accession>